<keyword id="KW-0002">3D-structure</keyword>
<keyword id="KW-0134">Cell wall</keyword>
<keyword id="KW-0326">Glycosidase</keyword>
<keyword id="KW-0378">Hydrolase</keyword>
<keyword id="KW-0572">Peptidoglycan-anchor</keyword>
<keyword id="KW-1185">Reference proteome</keyword>
<keyword id="KW-0677">Repeat</keyword>
<keyword id="KW-0964">Secreted</keyword>
<keyword id="KW-0732">Signal</keyword>
<gene>
    <name type="primary">nanA</name>
    <name type="ordered locus">spr1536</name>
</gene>
<protein>
    <recommendedName>
        <fullName>Sialidase A</fullName>
        <ecNumber>3.2.1.18</ecNumber>
    </recommendedName>
    <alternativeName>
        <fullName>Neuraminidase A</fullName>
    </alternativeName>
</protein>
<name>NANA_STRR6</name>
<sequence>MSYFRNRDIDIERNSMNRSVQERKCRYSIRKLSVGAVSMIVGAVVFGTSPVLAQEGASEQPLANETQLSGESSTLTDTEKSQPSSETELSGNKQEQERKDKQEEKIPRDYYARDLENVETVIEKEDVETNASNGQRVDLSSELDKLKKLENATVHMEFKPDAKAPAFYNLFSVSSATKKDEYFTMAVYNNTATLEGRGSDGKQFYNNYNDAPLKVKPGQWNSVTFTVEKPTAELPKGRVRLYVNGVLSRTSLRSGNFIKDMPDVTHVQIGATKRANNTVWGSNLQIRNLTVYNRALTPEEVQKRSQLFKRSDLEKKLPEGAALTEKTDIFESGRNGKPNKDGIKSYRIPALLKTDKGTLIAGADERRLHSSDWGDIGMVIRRSEDNGKTWGDRVTITNLRDNPKASDPSIGSPVNIDMVLVQDPETKRIFSIYDMFPEGKGIFGMSSQKEEAYKKIDGKTYQILYREGEKGAYTIRENGTVYTPDGKATDYRVVVDPVKPAYSDKGDLYKGNQLLGNIYFTTNKTSPFRIAKDSYLWMSYSDDDGKTWSAPQDITPMVKADWMKFLGVGPGTGIVLRNGPHKGRILIPVYTTNNVSHLNGSQSSRIIYSDDHGKTWHAGEAVNDNRQVDGQKIHSSTMNNRRAQNTESTVVQLNNGDVKLFMRGLTGDLQVATSKDGGVTWEKDIKRYPQVKDVYVQMSAIHTMHEGKEYIILSNAGGPKRENGMVHLARVEENGELTWLKHNPIQKGEFAYNSLQELGNGEYGILYEHTEKGQNAYTLSFRKFNWDFLSKDLISPTEAKVKRTREMGKGVIGLEFDSEVLVNKAPTLQLANGKTARFMTQYDTKTLLFTVDSEDMGQKVTGLAEGAIESMHNLPVSVAGTKLSNGMNGSEAAVHEVPEYTGPLGTSGEEPAPTVEKPEYTGPLGTSGEEPAPTVEKPEYTGPLGTAGEEAAPTVEKPEFTGGVNGTEPAVHEIAEYKGSDSLVTLTTKEDYTYKAPLAQQALPETGNKESDLLASLGLTAFFLGLFTLGKKREQ</sequence>
<comment type="catalytic activity">
    <reaction>
        <text>Hydrolysis of alpha-(2-&gt;3)-, alpha-(2-&gt;6)-, alpha-(2-&gt;8)- glycosidic linkages of terminal sialic acid residues in oligosaccharides, glycoproteins, glycolipids, colominic acid and synthetic substrates.</text>
        <dbReference type="EC" id="3.2.1.18"/>
    </reaction>
</comment>
<comment type="subcellular location">
    <subcellularLocation>
        <location evidence="3">Secreted</location>
        <location evidence="3">Cell wall</location>
        <topology evidence="3">Peptidoglycan-anchor</topology>
    </subcellularLocation>
</comment>
<comment type="similarity">
    <text evidence="5">Belongs to the glycosyl hydrolase 33 family.</text>
</comment>
<accession>P62576</accession>
<accession>Q54722</accession>
<accession>Q59959</accession>
<feature type="signal peptide" evidence="2">
    <location>
        <begin position="1"/>
        <end position="53"/>
    </location>
</feature>
<feature type="chain" id="PRO_0000012036" description="Sialidase A">
    <location>
        <begin position="54"/>
        <end position="1006"/>
    </location>
</feature>
<feature type="propeptide" id="PRO_0000012037" description="Removed by sortase" evidence="3">
    <location>
        <begin position="1007"/>
        <end position="1035"/>
    </location>
</feature>
<feature type="repeat" description="BNR 1">
    <location>
        <begin position="381"/>
        <end position="392"/>
    </location>
</feature>
<feature type="repeat" description="BNR 2">
    <location>
        <begin position="539"/>
        <end position="550"/>
    </location>
</feature>
<feature type="repeat" description="BNR 3">
    <location>
        <begin position="607"/>
        <end position="618"/>
    </location>
</feature>
<feature type="repeat" description="BNR 4">
    <location>
        <begin position="672"/>
        <end position="683"/>
    </location>
</feature>
<feature type="region of interest" description="Disordered" evidence="4">
    <location>
        <begin position="57"/>
        <end position="112"/>
    </location>
</feature>
<feature type="region of interest" description="Disordered" evidence="4">
    <location>
        <begin position="902"/>
        <end position="951"/>
    </location>
</feature>
<feature type="short sequence motif" description="LPXTG sorting signal" evidence="3">
    <location>
        <begin position="1003"/>
        <end position="1007"/>
    </location>
</feature>
<feature type="compositionally biased region" description="Polar residues" evidence="4">
    <location>
        <begin position="61"/>
        <end position="92"/>
    </location>
</feature>
<feature type="compositionally biased region" description="Basic and acidic residues" evidence="4">
    <location>
        <begin position="94"/>
        <end position="112"/>
    </location>
</feature>
<feature type="active site" description="Proton acceptor" evidence="1">
    <location>
        <position position="372"/>
    </location>
</feature>
<feature type="active site" evidence="1">
    <location>
        <position position="647"/>
    </location>
</feature>
<feature type="binding site" evidence="1">
    <location>
        <position position="347"/>
    </location>
    <ligand>
        <name>substrate</name>
    </ligand>
</feature>
<feature type="binding site" evidence="1">
    <location>
        <position position="663"/>
    </location>
    <ligand>
        <name>substrate</name>
    </ligand>
</feature>
<feature type="modified residue" description="Pentaglycyl murein peptidoglycan amidated threonine" evidence="3">
    <location>
        <position position="1006"/>
    </location>
</feature>
<feature type="strand" evidence="6">
    <location>
        <begin position="327"/>
        <end position="330"/>
    </location>
</feature>
<feature type="strand" evidence="6">
    <location>
        <begin position="345"/>
        <end position="353"/>
    </location>
</feature>
<feature type="strand" evidence="6">
    <location>
        <begin position="359"/>
        <end position="368"/>
    </location>
</feature>
<feature type="strand" evidence="6">
    <location>
        <begin position="370"/>
        <end position="385"/>
    </location>
</feature>
<feature type="strand" evidence="6">
    <location>
        <begin position="394"/>
        <end position="397"/>
    </location>
</feature>
<feature type="helix" evidence="6">
    <location>
        <begin position="408"/>
        <end position="410"/>
    </location>
</feature>
<feature type="strand" evidence="6">
    <location>
        <begin position="414"/>
        <end position="422"/>
    </location>
</feature>
<feature type="turn" evidence="6">
    <location>
        <begin position="424"/>
        <end position="426"/>
    </location>
</feature>
<feature type="strand" evidence="6">
    <location>
        <begin position="429"/>
        <end position="436"/>
    </location>
</feature>
<feature type="strand" evidence="6">
    <location>
        <begin position="438"/>
        <end position="440"/>
    </location>
</feature>
<feature type="helix" evidence="6">
    <location>
        <begin position="441"/>
        <end position="444"/>
    </location>
</feature>
<feature type="strand" evidence="6">
    <location>
        <begin position="453"/>
        <end position="456"/>
    </location>
</feature>
<feature type="strand" evidence="6">
    <location>
        <begin position="459"/>
        <end position="466"/>
    </location>
</feature>
<feature type="strand" evidence="6">
    <location>
        <begin position="473"/>
        <end position="475"/>
    </location>
</feature>
<feature type="helix" evidence="6">
    <location>
        <begin position="477"/>
        <end position="479"/>
    </location>
</feature>
<feature type="strand" evidence="6">
    <location>
        <begin position="480"/>
        <end position="482"/>
    </location>
</feature>
<feature type="strand" evidence="6">
    <location>
        <begin position="488"/>
        <end position="493"/>
    </location>
</feature>
<feature type="helix" evidence="6">
    <location>
        <begin position="500"/>
        <end position="502"/>
    </location>
</feature>
<feature type="turn" evidence="6">
    <location>
        <begin position="503"/>
        <end position="506"/>
    </location>
</feature>
<feature type="strand" evidence="6">
    <location>
        <begin position="507"/>
        <end position="510"/>
    </location>
</feature>
<feature type="strand" evidence="6">
    <location>
        <begin position="513"/>
        <end position="517"/>
    </location>
</feature>
<feature type="strand" evidence="6">
    <location>
        <begin position="525"/>
        <end position="529"/>
    </location>
</feature>
<feature type="strand" evidence="6">
    <location>
        <begin position="535"/>
        <end position="543"/>
    </location>
</feature>
<feature type="helix" evidence="6">
    <location>
        <begin position="555"/>
        <end position="558"/>
    </location>
</feature>
<feature type="strand" evidence="6">
    <location>
        <begin position="566"/>
        <end position="568"/>
    </location>
</feature>
<feature type="strand" evidence="7">
    <location>
        <begin position="570"/>
        <end position="572"/>
    </location>
</feature>
<feature type="turn" evidence="6">
    <location>
        <begin position="580"/>
        <end position="583"/>
    </location>
</feature>
<feature type="strand" evidence="6">
    <location>
        <begin position="585"/>
        <end position="591"/>
    </location>
</feature>
<feature type="turn" evidence="6">
    <location>
        <begin position="594"/>
        <end position="596"/>
    </location>
</feature>
<feature type="helix" evidence="6">
    <location>
        <begin position="597"/>
        <end position="600"/>
    </location>
</feature>
<feature type="strand" evidence="6">
    <location>
        <begin position="603"/>
        <end position="611"/>
    </location>
</feature>
<feature type="turn" evidence="6">
    <location>
        <begin position="622"/>
        <end position="625"/>
    </location>
</feature>
<feature type="strand" evidence="6">
    <location>
        <begin position="626"/>
        <end position="628"/>
    </location>
</feature>
<feature type="strand" evidence="6">
    <location>
        <begin position="631"/>
        <end position="633"/>
    </location>
</feature>
<feature type="turn" evidence="6">
    <location>
        <begin position="635"/>
        <end position="637"/>
    </location>
</feature>
<feature type="helix" evidence="6">
    <location>
        <begin position="641"/>
        <end position="643"/>
    </location>
</feature>
<feature type="strand" evidence="6">
    <location>
        <begin position="647"/>
        <end position="652"/>
    </location>
</feature>
<feature type="strand" evidence="6">
    <location>
        <begin position="658"/>
        <end position="662"/>
    </location>
</feature>
<feature type="strand" evidence="6">
    <location>
        <begin position="665"/>
        <end position="680"/>
    </location>
</feature>
<feature type="strand" evidence="6">
    <location>
        <begin position="686"/>
        <end position="692"/>
    </location>
</feature>
<feature type="strand" evidence="6">
    <location>
        <begin position="699"/>
        <end position="705"/>
    </location>
</feature>
<feature type="strand" evidence="6">
    <location>
        <begin position="708"/>
        <end position="716"/>
    </location>
</feature>
<feature type="strand" evidence="6">
    <location>
        <begin position="718"/>
        <end position="731"/>
    </location>
</feature>
<feature type="strand" evidence="6">
    <location>
        <begin position="733"/>
        <end position="735"/>
    </location>
</feature>
<feature type="strand" evidence="6">
    <location>
        <begin position="737"/>
        <end position="749"/>
    </location>
</feature>
<feature type="strand" evidence="6">
    <location>
        <begin position="753"/>
        <end position="759"/>
    </location>
</feature>
<feature type="strand" evidence="6">
    <location>
        <begin position="762"/>
        <end position="769"/>
    </location>
</feature>
<feature type="strand" evidence="6">
    <location>
        <begin position="778"/>
        <end position="785"/>
    </location>
</feature>
<feature type="helix" evidence="6">
    <location>
        <begin position="786"/>
        <end position="789"/>
    </location>
</feature>
<evidence type="ECO:0000250" key="1"/>
<evidence type="ECO:0000255" key="2"/>
<evidence type="ECO:0000255" key="3">
    <source>
        <dbReference type="PROSITE-ProRule" id="PRU00477"/>
    </source>
</evidence>
<evidence type="ECO:0000256" key="4">
    <source>
        <dbReference type="SAM" id="MobiDB-lite"/>
    </source>
</evidence>
<evidence type="ECO:0000305" key="5"/>
<evidence type="ECO:0007829" key="6">
    <source>
        <dbReference type="PDB" id="2W20"/>
    </source>
</evidence>
<evidence type="ECO:0007829" key="7">
    <source>
        <dbReference type="PDB" id="3H73"/>
    </source>
</evidence>
<dbReference type="EC" id="3.2.1.18"/>
<dbReference type="EMBL" id="AE007317">
    <property type="protein sequence ID" value="AAL00340.1"/>
    <property type="molecule type" value="Genomic_DNA"/>
</dbReference>
<dbReference type="PIR" id="G98063">
    <property type="entry name" value="G98063"/>
</dbReference>
<dbReference type="RefSeq" id="NP_359129.1">
    <property type="nucleotide sequence ID" value="NC_003098.1"/>
</dbReference>
<dbReference type="PDB" id="2W20">
    <property type="method" value="X-ray"/>
    <property type="resolution" value="1.49 A"/>
    <property type="chains" value="A/B=321-791"/>
</dbReference>
<dbReference type="PDB" id="3H71">
    <property type="method" value="X-ray"/>
    <property type="resolution" value="1.70 A"/>
    <property type="chains" value="A/B=317-793"/>
</dbReference>
<dbReference type="PDB" id="3H72">
    <property type="method" value="X-ray"/>
    <property type="resolution" value="1.70 A"/>
    <property type="chains" value="A/B=317-793"/>
</dbReference>
<dbReference type="PDB" id="3H73">
    <property type="method" value="X-ray"/>
    <property type="resolution" value="1.70 A"/>
    <property type="chains" value="A/B=317-793"/>
</dbReference>
<dbReference type="PDBsum" id="2W20"/>
<dbReference type="PDBsum" id="3H71"/>
<dbReference type="PDBsum" id="3H72"/>
<dbReference type="PDBsum" id="3H73"/>
<dbReference type="SMR" id="P62576"/>
<dbReference type="STRING" id="171101.spr1536"/>
<dbReference type="CAZy" id="CBM40">
    <property type="family name" value="Carbohydrate-Binding Module Family 40"/>
</dbReference>
<dbReference type="CAZy" id="GH33">
    <property type="family name" value="Glycoside Hydrolase Family 33"/>
</dbReference>
<dbReference type="KEGG" id="spr:spr1536"/>
<dbReference type="PATRIC" id="fig|171101.6.peg.1657"/>
<dbReference type="eggNOG" id="COG4409">
    <property type="taxonomic scope" value="Bacteria"/>
</dbReference>
<dbReference type="eggNOG" id="COG4724">
    <property type="taxonomic scope" value="Bacteria"/>
</dbReference>
<dbReference type="HOGENOM" id="CLU_002070_0_0_9"/>
<dbReference type="EvolutionaryTrace" id="P62576"/>
<dbReference type="PHI-base" id="PHI:11278"/>
<dbReference type="PHI-base" id="PHI:7006"/>
<dbReference type="PHI-base" id="PHI:7676"/>
<dbReference type="Proteomes" id="UP000000586">
    <property type="component" value="Chromosome"/>
</dbReference>
<dbReference type="GO" id="GO:0005737">
    <property type="term" value="C:cytoplasm"/>
    <property type="evidence" value="ECO:0000318"/>
    <property type="project" value="GO_Central"/>
</dbReference>
<dbReference type="GO" id="GO:0005576">
    <property type="term" value="C:extracellular region"/>
    <property type="evidence" value="ECO:0007669"/>
    <property type="project" value="UniProtKB-KW"/>
</dbReference>
<dbReference type="GO" id="GO:0043231">
    <property type="term" value="C:intracellular membrane-bounded organelle"/>
    <property type="evidence" value="ECO:0000318"/>
    <property type="project" value="GO_Central"/>
</dbReference>
<dbReference type="GO" id="GO:0016020">
    <property type="term" value="C:membrane"/>
    <property type="evidence" value="ECO:0000318"/>
    <property type="project" value="GO_Central"/>
</dbReference>
<dbReference type="GO" id="GO:0004308">
    <property type="term" value="F:exo-alpha-sialidase activity"/>
    <property type="evidence" value="ECO:0000318"/>
    <property type="project" value="GO_Central"/>
</dbReference>
<dbReference type="GO" id="GO:0006689">
    <property type="term" value="P:ganglioside catabolic process"/>
    <property type="evidence" value="ECO:0000318"/>
    <property type="project" value="GO_Central"/>
</dbReference>
<dbReference type="GO" id="GO:0009313">
    <property type="term" value="P:oligosaccharide catabolic process"/>
    <property type="evidence" value="ECO:0000318"/>
    <property type="project" value="GO_Central"/>
</dbReference>
<dbReference type="CDD" id="cd15482">
    <property type="entry name" value="Sialidase_non-viral"/>
    <property type="match status" value="1"/>
</dbReference>
<dbReference type="FunFam" id="2.40.220.10:FF:000001">
    <property type="entry name" value="Sialidase A"/>
    <property type="match status" value="1"/>
</dbReference>
<dbReference type="Gene3D" id="2.120.10.10">
    <property type="match status" value="1"/>
</dbReference>
<dbReference type="Gene3D" id="2.60.120.200">
    <property type="match status" value="1"/>
</dbReference>
<dbReference type="Gene3D" id="2.40.220.10">
    <property type="entry name" value="Intramolecular Trans-sialidase, Domain 3"/>
    <property type="match status" value="1"/>
</dbReference>
<dbReference type="InterPro" id="IPR013320">
    <property type="entry name" value="ConA-like_dom_sf"/>
</dbReference>
<dbReference type="InterPro" id="IPR004124">
    <property type="entry name" value="Glyco_hydro_33_N"/>
</dbReference>
<dbReference type="InterPro" id="IPR001791">
    <property type="entry name" value="Laminin_G"/>
</dbReference>
<dbReference type="InterPro" id="IPR019931">
    <property type="entry name" value="LPXTG_anchor"/>
</dbReference>
<dbReference type="InterPro" id="IPR049964">
    <property type="entry name" value="NanA_rpt"/>
</dbReference>
<dbReference type="InterPro" id="IPR011040">
    <property type="entry name" value="Sialidase"/>
</dbReference>
<dbReference type="InterPro" id="IPR026856">
    <property type="entry name" value="Sialidase_fam"/>
</dbReference>
<dbReference type="InterPro" id="IPR036278">
    <property type="entry name" value="Sialidase_sf"/>
</dbReference>
<dbReference type="InterPro" id="IPR023364">
    <property type="entry name" value="Trans_sialidase_dom3"/>
</dbReference>
<dbReference type="InterPro" id="IPR005877">
    <property type="entry name" value="YSIRK_signal_dom"/>
</dbReference>
<dbReference type="NCBIfam" id="TIGR01167">
    <property type="entry name" value="LPXTG_anchor"/>
    <property type="match status" value="1"/>
</dbReference>
<dbReference type="NCBIfam" id="NF043031">
    <property type="entry name" value="SIALI-17"/>
    <property type="match status" value="3"/>
</dbReference>
<dbReference type="NCBIfam" id="TIGR01168">
    <property type="entry name" value="YSIRK_signal"/>
    <property type="match status" value="1"/>
</dbReference>
<dbReference type="PANTHER" id="PTHR10628:SF30">
    <property type="entry name" value="EXO-ALPHA-SIALIDASE"/>
    <property type="match status" value="1"/>
</dbReference>
<dbReference type="PANTHER" id="PTHR10628">
    <property type="entry name" value="SIALIDASE"/>
    <property type="match status" value="1"/>
</dbReference>
<dbReference type="Pfam" id="PF13088">
    <property type="entry name" value="BNR_2"/>
    <property type="match status" value="1"/>
</dbReference>
<dbReference type="Pfam" id="PF02973">
    <property type="entry name" value="Sialidase"/>
    <property type="match status" value="1"/>
</dbReference>
<dbReference type="Pfam" id="PF04650">
    <property type="entry name" value="YSIRK_signal"/>
    <property type="match status" value="1"/>
</dbReference>
<dbReference type="SMART" id="SM00282">
    <property type="entry name" value="LamG"/>
    <property type="match status" value="1"/>
</dbReference>
<dbReference type="SUPFAM" id="SSF49899">
    <property type="entry name" value="Concanavalin A-like lectins/glucanases"/>
    <property type="match status" value="1"/>
</dbReference>
<dbReference type="SUPFAM" id="SSF50939">
    <property type="entry name" value="Sialidases"/>
    <property type="match status" value="1"/>
</dbReference>
<dbReference type="PROSITE" id="PS50847">
    <property type="entry name" value="GRAM_POS_ANCHORING"/>
    <property type="match status" value="1"/>
</dbReference>
<organism>
    <name type="scientific">Streptococcus pneumoniae (strain ATCC BAA-255 / R6)</name>
    <dbReference type="NCBI Taxonomy" id="171101"/>
    <lineage>
        <taxon>Bacteria</taxon>
        <taxon>Bacillati</taxon>
        <taxon>Bacillota</taxon>
        <taxon>Bacilli</taxon>
        <taxon>Lactobacillales</taxon>
        <taxon>Streptococcaceae</taxon>
        <taxon>Streptococcus</taxon>
    </lineage>
</organism>
<reference key="1">
    <citation type="journal article" date="2001" name="J. Bacteriol.">
        <title>Genome of the bacterium Streptococcus pneumoniae strain R6.</title>
        <authorList>
            <person name="Hoskins J."/>
            <person name="Alborn W.E. Jr."/>
            <person name="Arnold J."/>
            <person name="Blaszczak L.C."/>
            <person name="Burgett S."/>
            <person name="DeHoff B.S."/>
            <person name="Estrem S.T."/>
            <person name="Fritz L."/>
            <person name="Fu D.-J."/>
            <person name="Fuller W."/>
            <person name="Geringer C."/>
            <person name="Gilmour R."/>
            <person name="Glass J.S."/>
            <person name="Khoja H."/>
            <person name="Kraft A.R."/>
            <person name="Lagace R.E."/>
            <person name="LeBlanc D.J."/>
            <person name="Lee L.N."/>
            <person name="Lefkowitz E.J."/>
            <person name="Lu J."/>
            <person name="Matsushima P."/>
            <person name="McAhren S.M."/>
            <person name="McHenney M."/>
            <person name="McLeaster K."/>
            <person name="Mundy C.W."/>
            <person name="Nicas T.I."/>
            <person name="Norris F.H."/>
            <person name="O'Gara M."/>
            <person name="Peery R.B."/>
            <person name="Robertson G.T."/>
            <person name="Rockey P."/>
            <person name="Sun P.-M."/>
            <person name="Winkler M.E."/>
            <person name="Yang Y."/>
            <person name="Young-Bellido M."/>
            <person name="Zhao G."/>
            <person name="Zook C.A."/>
            <person name="Baltz R.H."/>
            <person name="Jaskunas S.R."/>
            <person name="Rosteck P.R. Jr."/>
            <person name="Skatrud P.L."/>
            <person name="Glass J.I."/>
        </authorList>
    </citation>
    <scope>NUCLEOTIDE SEQUENCE [LARGE SCALE GENOMIC DNA]</scope>
    <source>
        <strain>ATCC BAA-255 / R6</strain>
    </source>
</reference>
<proteinExistence type="evidence at protein level"/>